<keyword id="KW-0067">ATP-binding</keyword>
<keyword id="KW-0903">Direct protein sequencing</keyword>
<keyword id="KW-0418">Kinase</keyword>
<keyword id="KW-0460">Magnesium</keyword>
<keyword id="KW-0479">Metal-binding</keyword>
<keyword id="KW-0545">Nucleotide biosynthesis</keyword>
<keyword id="KW-0547">Nucleotide-binding</keyword>
<keyword id="KW-1185">Reference proteome</keyword>
<keyword id="KW-0808">Transferase</keyword>
<organism>
    <name type="scientific">Mus musculus</name>
    <name type="common">Mouse</name>
    <dbReference type="NCBI Taxonomy" id="10090"/>
    <lineage>
        <taxon>Eukaryota</taxon>
        <taxon>Metazoa</taxon>
        <taxon>Chordata</taxon>
        <taxon>Craniata</taxon>
        <taxon>Vertebrata</taxon>
        <taxon>Euteleostomi</taxon>
        <taxon>Mammalia</taxon>
        <taxon>Eutheria</taxon>
        <taxon>Euarchontoglires</taxon>
        <taxon>Glires</taxon>
        <taxon>Rodentia</taxon>
        <taxon>Myomorpha</taxon>
        <taxon>Muroidea</taxon>
        <taxon>Muridae</taxon>
        <taxon>Murinae</taxon>
        <taxon>Mus</taxon>
        <taxon>Mus</taxon>
    </lineage>
</organism>
<accession>Q9CS42</accession>
<accession>Q9CZA9</accession>
<sequence length="318" mass="34786">MPNIVLFSGSSHQDLSQRVADRLGLELGKVVTKKFSNQETSVEIGESVRGEDVYIIQSGCGEINDNLMELLIMINACKIASSSRVTAVIPCFPYARQDKKDKSRAPISAKLVANMLSVAGADHIITMDLHASQIQGFFDIPVDNLYAEPAVLQWIRENITEWRNCIIVSPDAGGAKRVTSIADRLNVEFALIHKERKKANEVDRMVLVGDVKDRVAILVDDMADTCGTICHAADKLLSAGATKVYAILTHGIFSGPAISRINSAAFEAVVVTNTIPQEDKMKHCSKIQVIDISMILAEAIRRTHNGESVSYLFSHVPL</sequence>
<evidence type="ECO:0000250" key="1"/>
<evidence type="ECO:0000255" key="2"/>
<evidence type="ECO:0000305" key="3"/>
<name>PRPS2_MOUSE</name>
<protein>
    <recommendedName>
        <fullName>Ribose-phosphate pyrophosphokinase 2</fullName>
        <ecNumber>2.7.6.1</ecNumber>
    </recommendedName>
    <alternativeName>
        <fullName>Phosphoribosyl pyrophosphate synthase II</fullName>
        <shortName>PRS-II</shortName>
    </alternativeName>
</protein>
<dbReference type="EC" id="2.7.6.1"/>
<dbReference type="EMBL" id="AK012819">
    <property type="protein sequence ID" value="BAB28492.1"/>
    <property type="molecule type" value="mRNA"/>
</dbReference>
<dbReference type="EMBL" id="AK019169">
    <property type="protein sequence ID" value="BAB31583.2"/>
    <property type="molecule type" value="mRNA"/>
</dbReference>
<dbReference type="EMBL" id="AK029690">
    <property type="protein sequence ID" value="BAC26565.1"/>
    <property type="molecule type" value="mRNA"/>
</dbReference>
<dbReference type="EMBL" id="AK045007">
    <property type="protein sequence ID" value="BAC32182.1"/>
    <property type="molecule type" value="mRNA"/>
</dbReference>
<dbReference type="EMBL" id="BC024942">
    <property type="protein sequence ID" value="AAH24942.1"/>
    <property type="molecule type" value="mRNA"/>
</dbReference>
<dbReference type="CCDS" id="CCDS30532.1"/>
<dbReference type="RefSeq" id="NP_001300687.1">
    <property type="nucleotide sequence ID" value="NM_001313758.1"/>
</dbReference>
<dbReference type="RefSeq" id="NP_080938.1">
    <property type="nucleotide sequence ID" value="NM_026662.5"/>
</dbReference>
<dbReference type="SMR" id="Q9CS42"/>
<dbReference type="BioGRID" id="225774">
    <property type="interactions" value="25"/>
</dbReference>
<dbReference type="FunCoup" id="Q9CS42">
    <property type="interactions" value="606"/>
</dbReference>
<dbReference type="IntAct" id="Q9CS42">
    <property type="interactions" value="2"/>
</dbReference>
<dbReference type="MINT" id="Q9CS42"/>
<dbReference type="STRING" id="10090.ENSMUSP00000026839"/>
<dbReference type="GlyGen" id="Q9CS42">
    <property type="glycosylation" value="2 sites, 1 N-linked glycan (1 site), 1 O-linked glycan (1 site)"/>
</dbReference>
<dbReference type="iPTMnet" id="Q9CS42"/>
<dbReference type="PhosphoSitePlus" id="Q9CS42"/>
<dbReference type="SwissPalm" id="Q9CS42"/>
<dbReference type="jPOST" id="Q9CS42"/>
<dbReference type="PaxDb" id="10090-ENSMUSP00000026839"/>
<dbReference type="PeptideAtlas" id="Q9CS42"/>
<dbReference type="ProteomicsDB" id="291565"/>
<dbReference type="Pumba" id="Q9CS42"/>
<dbReference type="Antibodypedia" id="8471">
    <property type="antibodies" value="234 antibodies from 29 providers"/>
</dbReference>
<dbReference type="DNASU" id="110639"/>
<dbReference type="Ensembl" id="ENSMUST00000026839.5">
    <property type="protein sequence ID" value="ENSMUSP00000026839.5"/>
    <property type="gene ID" value="ENSMUSG00000025742.6"/>
</dbReference>
<dbReference type="GeneID" id="110639"/>
<dbReference type="KEGG" id="mmu:110639"/>
<dbReference type="UCSC" id="uc009uxd.1">
    <property type="organism name" value="mouse"/>
</dbReference>
<dbReference type="AGR" id="MGI:97776"/>
<dbReference type="CTD" id="5634"/>
<dbReference type="MGI" id="MGI:97776">
    <property type="gene designation" value="Prps2"/>
</dbReference>
<dbReference type="VEuPathDB" id="HostDB:ENSMUSG00000025742"/>
<dbReference type="eggNOG" id="KOG1448">
    <property type="taxonomic scope" value="Eukaryota"/>
</dbReference>
<dbReference type="GeneTree" id="ENSGT00950000182803"/>
<dbReference type="HOGENOM" id="CLU_033546_4_0_1"/>
<dbReference type="InParanoid" id="Q9CS42"/>
<dbReference type="OMA" id="LLPEHKC"/>
<dbReference type="OrthoDB" id="413572at2759"/>
<dbReference type="PhylomeDB" id="Q9CS42"/>
<dbReference type="TreeFam" id="TF106366"/>
<dbReference type="Reactome" id="R-MMU-73843">
    <property type="pathway name" value="5-Phosphoribose 1-diphosphate biosynthesis"/>
</dbReference>
<dbReference type="UniPathway" id="UPA00087">
    <property type="reaction ID" value="UER00172"/>
</dbReference>
<dbReference type="BioGRID-ORCS" id="110639">
    <property type="hits" value="3 hits in 80 CRISPR screens"/>
</dbReference>
<dbReference type="ChiTaRS" id="Prps2">
    <property type="organism name" value="mouse"/>
</dbReference>
<dbReference type="PRO" id="PR:Q9CS42"/>
<dbReference type="Proteomes" id="UP000000589">
    <property type="component" value="Chromosome X"/>
</dbReference>
<dbReference type="RNAct" id="Q9CS42">
    <property type="molecule type" value="protein"/>
</dbReference>
<dbReference type="Bgee" id="ENSMUSG00000025742">
    <property type="expression patterns" value="Expressed in gastrula and 243 other cell types or tissues"/>
</dbReference>
<dbReference type="GO" id="GO:0005829">
    <property type="term" value="C:cytosol"/>
    <property type="evidence" value="ECO:0000314"/>
    <property type="project" value="MGI"/>
</dbReference>
<dbReference type="GO" id="GO:0005524">
    <property type="term" value="F:ATP binding"/>
    <property type="evidence" value="ECO:0000250"/>
    <property type="project" value="UniProtKB"/>
</dbReference>
<dbReference type="GO" id="GO:0016301">
    <property type="term" value="F:kinase activity"/>
    <property type="evidence" value="ECO:0007669"/>
    <property type="project" value="UniProtKB-KW"/>
</dbReference>
<dbReference type="GO" id="GO:0000287">
    <property type="term" value="F:magnesium ion binding"/>
    <property type="evidence" value="ECO:0007669"/>
    <property type="project" value="InterPro"/>
</dbReference>
<dbReference type="GO" id="GO:0042803">
    <property type="term" value="F:protein homodimerization activity"/>
    <property type="evidence" value="ECO:0000250"/>
    <property type="project" value="UniProtKB"/>
</dbReference>
<dbReference type="GO" id="GO:0004749">
    <property type="term" value="F:ribose phosphate diphosphokinase activity"/>
    <property type="evidence" value="ECO:0000314"/>
    <property type="project" value="MGI"/>
</dbReference>
<dbReference type="GO" id="GO:0006015">
    <property type="term" value="P:5-phosphoribose 1-diphosphate biosynthetic process"/>
    <property type="evidence" value="ECO:0000314"/>
    <property type="project" value="MGI"/>
</dbReference>
<dbReference type="GO" id="GO:0009165">
    <property type="term" value="P:nucleotide biosynthetic process"/>
    <property type="evidence" value="ECO:0007669"/>
    <property type="project" value="UniProtKB-KW"/>
</dbReference>
<dbReference type="GO" id="GO:0006098">
    <property type="term" value="P:pentose-phosphate shunt"/>
    <property type="evidence" value="ECO:0000315"/>
    <property type="project" value="MGI"/>
</dbReference>
<dbReference type="GO" id="GO:0009156">
    <property type="term" value="P:ribonucleoside monophosphate biosynthetic process"/>
    <property type="evidence" value="ECO:0007669"/>
    <property type="project" value="InterPro"/>
</dbReference>
<dbReference type="CDD" id="cd06223">
    <property type="entry name" value="PRTases_typeI"/>
    <property type="match status" value="1"/>
</dbReference>
<dbReference type="FunFam" id="3.40.50.2020:FF:000031">
    <property type="entry name" value="Probable PRS4-ribose-phosphate pyrophosphokinase 3"/>
    <property type="match status" value="1"/>
</dbReference>
<dbReference type="FunFam" id="3.40.50.2020:FF:000005">
    <property type="entry name" value="Ribose-phosphate pyrophosphokinase 1"/>
    <property type="match status" value="1"/>
</dbReference>
<dbReference type="Gene3D" id="3.40.50.2020">
    <property type="match status" value="2"/>
</dbReference>
<dbReference type="HAMAP" id="MF_00583_B">
    <property type="entry name" value="RibP_PPkinase_B"/>
    <property type="match status" value="1"/>
</dbReference>
<dbReference type="InterPro" id="IPR000842">
    <property type="entry name" value="PRib_PP_synth_CS"/>
</dbReference>
<dbReference type="InterPro" id="IPR029099">
    <property type="entry name" value="Pribosyltran_N"/>
</dbReference>
<dbReference type="InterPro" id="IPR000836">
    <property type="entry name" value="PRibTrfase_dom"/>
</dbReference>
<dbReference type="InterPro" id="IPR029057">
    <property type="entry name" value="PRTase-like"/>
</dbReference>
<dbReference type="InterPro" id="IPR005946">
    <property type="entry name" value="Rib-P_diPkinase"/>
</dbReference>
<dbReference type="InterPro" id="IPR037515">
    <property type="entry name" value="Rib-P_diPkinase_bac"/>
</dbReference>
<dbReference type="NCBIfam" id="NF002320">
    <property type="entry name" value="PRK01259.1"/>
    <property type="match status" value="1"/>
</dbReference>
<dbReference type="NCBIfam" id="TIGR01251">
    <property type="entry name" value="ribP_PPkin"/>
    <property type="match status" value="1"/>
</dbReference>
<dbReference type="PANTHER" id="PTHR10210">
    <property type="entry name" value="RIBOSE-PHOSPHATE DIPHOSPHOKINASE FAMILY MEMBER"/>
    <property type="match status" value="1"/>
</dbReference>
<dbReference type="PANTHER" id="PTHR10210:SF32">
    <property type="entry name" value="RIBOSE-PHOSPHATE PYROPHOSPHOKINASE 2"/>
    <property type="match status" value="1"/>
</dbReference>
<dbReference type="Pfam" id="PF14572">
    <property type="entry name" value="Pribosyl_synth"/>
    <property type="match status" value="1"/>
</dbReference>
<dbReference type="Pfam" id="PF13793">
    <property type="entry name" value="Pribosyltran_N"/>
    <property type="match status" value="1"/>
</dbReference>
<dbReference type="SMART" id="SM01400">
    <property type="entry name" value="Pribosyltran_N"/>
    <property type="match status" value="1"/>
</dbReference>
<dbReference type="SUPFAM" id="SSF53271">
    <property type="entry name" value="PRTase-like"/>
    <property type="match status" value="1"/>
</dbReference>
<dbReference type="PROSITE" id="PS00114">
    <property type="entry name" value="PRPP_SYNTHASE"/>
    <property type="match status" value="1"/>
</dbReference>
<proteinExistence type="evidence at protein level"/>
<feature type="chain" id="PRO_0000141076" description="Ribose-phosphate pyrophosphokinase 2">
    <location>
        <begin position="1"/>
        <end position="318"/>
    </location>
</feature>
<feature type="region of interest" description="Binding of phosphoribosylpyrophosphate" evidence="2">
    <location>
        <begin position="212"/>
        <end position="227"/>
    </location>
</feature>
<feature type="binding site" evidence="1">
    <location>
        <begin position="96"/>
        <end position="101"/>
    </location>
    <ligand>
        <name>ATP</name>
        <dbReference type="ChEBI" id="CHEBI:30616"/>
    </ligand>
</feature>
<feature type="binding site" evidence="2">
    <location>
        <position position="128"/>
    </location>
    <ligand>
        <name>Mg(2+)</name>
        <dbReference type="ChEBI" id="CHEBI:18420"/>
    </ligand>
</feature>
<feature type="binding site" evidence="1">
    <location>
        <position position="130"/>
    </location>
    <ligand>
        <name>ATP</name>
        <dbReference type="ChEBI" id="CHEBI:30616"/>
    </ligand>
</feature>
<feature type="binding site" evidence="2">
    <location>
        <position position="130"/>
    </location>
    <ligand>
        <name>Mg(2+)</name>
        <dbReference type="ChEBI" id="CHEBI:18420"/>
    </ligand>
</feature>
<feature type="binding site" evidence="2">
    <location>
        <position position="139"/>
    </location>
    <ligand>
        <name>Mg(2+)</name>
        <dbReference type="ChEBI" id="CHEBI:18420"/>
    </ligand>
</feature>
<feature type="binding site" evidence="2">
    <location>
        <position position="143"/>
    </location>
    <ligand>
        <name>Mg(2+)</name>
        <dbReference type="ChEBI" id="CHEBI:18420"/>
    </ligand>
</feature>
<reference key="1">
    <citation type="journal article" date="2005" name="Science">
        <title>The transcriptional landscape of the mammalian genome.</title>
        <authorList>
            <person name="Carninci P."/>
            <person name="Kasukawa T."/>
            <person name="Katayama S."/>
            <person name="Gough J."/>
            <person name="Frith M.C."/>
            <person name="Maeda N."/>
            <person name="Oyama R."/>
            <person name="Ravasi T."/>
            <person name="Lenhard B."/>
            <person name="Wells C."/>
            <person name="Kodzius R."/>
            <person name="Shimokawa K."/>
            <person name="Bajic V.B."/>
            <person name="Brenner S.E."/>
            <person name="Batalov S."/>
            <person name="Forrest A.R."/>
            <person name="Zavolan M."/>
            <person name="Davis M.J."/>
            <person name="Wilming L.G."/>
            <person name="Aidinis V."/>
            <person name="Allen J.E."/>
            <person name="Ambesi-Impiombato A."/>
            <person name="Apweiler R."/>
            <person name="Aturaliya R.N."/>
            <person name="Bailey T.L."/>
            <person name="Bansal M."/>
            <person name="Baxter L."/>
            <person name="Beisel K.W."/>
            <person name="Bersano T."/>
            <person name="Bono H."/>
            <person name="Chalk A.M."/>
            <person name="Chiu K.P."/>
            <person name="Choudhary V."/>
            <person name="Christoffels A."/>
            <person name="Clutterbuck D.R."/>
            <person name="Crowe M.L."/>
            <person name="Dalla E."/>
            <person name="Dalrymple B.P."/>
            <person name="de Bono B."/>
            <person name="Della Gatta G."/>
            <person name="di Bernardo D."/>
            <person name="Down T."/>
            <person name="Engstrom P."/>
            <person name="Fagiolini M."/>
            <person name="Faulkner G."/>
            <person name="Fletcher C.F."/>
            <person name="Fukushima T."/>
            <person name="Furuno M."/>
            <person name="Futaki S."/>
            <person name="Gariboldi M."/>
            <person name="Georgii-Hemming P."/>
            <person name="Gingeras T.R."/>
            <person name="Gojobori T."/>
            <person name="Green R.E."/>
            <person name="Gustincich S."/>
            <person name="Harbers M."/>
            <person name="Hayashi Y."/>
            <person name="Hensch T.K."/>
            <person name="Hirokawa N."/>
            <person name="Hill D."/>
            <person name="Huminiecki L."/>
            <person name="Iacono M."/>
            <person name="Ikeo K."/>
            <person name="Iwama A."/>
            <person name="Ishikawa T."/>
            <person name="Jakt M."/>
            <person name="Kanapin A."/>
            <person name="Katoh M."/>
            <person name="Kawasawa Y."/>
            <person name="Kelso J."/>
            <person name="Kitamura H."/>
            <person name="Kitano H."/>
            <person name="Kollias G."/>
            <person name="Krishnan S.P."/>
            <person name="Kruger A."/>
            <person name="Kummerfeld S.K."/>
            <person name="Kurochkin I.V."/>
            <person name="Lareau L.F."/>
            <person name="Lazarevic D."/>
            <person name="Lipovich L."/>
            <person name="Liu J."/>
            <person name="Liuni S."/>
            <person name="McWilliam S."/>
            <person name="Madan Babu M."/>
            <person name="Madera M."/>
            <person name="Marchionni L."/>
            <person name="Matsuda H."/>
            <person name="Matsuzawa S."/>
            <person name="Miki H."/>
            <person name="Mignone F."/>
            <person name="Miyake S."/>
            <person name="Morris K."/>
            <person name="Mottagui-Tabar S."/>
            <person name="Mulder N."/>
            <person name="Nakano N."/>
            <person name="Nakauchi H."/>
            <person name="Ng P."/>
            <person name="Nilsson R."/>
            <person name="Nishiguchi S."/>
            <person name="Nishikawa S."/>
            <person name="Nori F."/>
            <person name="Ohara O."/>
            <person name="Okazaki Y."/>
            <person name="Orlando V."/>
            <person name="Pang K.C."/>
            <person name="Pavan W.J."/>
            <person name="Pavesi G."/>
            <person name="Pesole G."/>
            <person name="Petrovsky N."/>
            <person name="Piazza S."/>
            <person name="Reed J."/>
            <person name="Reid J.F."/>
            <person name="Ring B.Z."/>
            <person name="Ringwald M."/>
            <person name="Rost B."/>
            <person name="Ruan Y."/>
            <person name="Salzberg S.L."/>
            <person name="Sandelin A."/>
            <person name="Schneider C."/>
            <person name="Schoenbach C."/>
            <person name="Sekiguchi K."/>
            <person name="Semple C.A."/>
            <person name="Seno S."/>
            <person name="Sessa L."/>
            <person name="Sheng Y."/>
            <person name="Shibata Y."/>
            <person name="Shimada H."/>
            <person name="Shimada K."/>
            <person name="Silva D."/>
            <person name="Sinclair B."/>
            <person name="Sperling S."/>
            <person name="Stupka E."/>
            <person name="Sugiura K."/>
            <person name="Sultana R."/>
            <person name="Takenaka Y."/>
            <person name="Taki K."/>
            <person name="Tammoja K."/>
            <person name="Tan S.L."/>
            <person name="Tang S."/>
            <person name="Taylor M.S."/>
            <person name="Tegner J."/>
            <person name="Teichmann S.A."/>
            <person name="Ueda H.R."/>
            <person name="van Nimwegen E."/>
            <person name="Verardo R."/>
            <person name="Wei C.L."/>
            <person name="Yagi K."/>
            <person name="Yamanishi H."/>
            <person name="Zabarovsky E."/>
            <person name="Zhu S."/>
            <person name="Zimmer A."/>
            <person name="Hide W."/>
            <person name="Bult C."/>
            <person name="Grimmond S.M."/>
            <person name="Teasdale R.D."/>
            <person name="Liu E.T."/>
            <person name="Brusic V."/>
            <person name="Quackenbush J."/>
            <person name="Wahlestedt C."/>
            <person name="Mattick J.S."/>
            <person name="Hume D.A."/>
            <person name="Kai C."/>
            <person name="Sasaki D."/>
            <person name="Tomaru Y."/>
            <person name="Fukuda S."/>
            <person name="Kanamori-Katayama M."/>
            <person name="Suzuki M."/>
            <person name="Aoki J."/>
            <person name="Arakawa T."/>
            <person name="Iida J."/>
            <person name="Imamura K."/>
            <person name="Itoh M."/>
            <person name="Kato T."/>
            <person name="Kawaji H."/>
            <person name="Kawagashira N."/>
            <person name="Kawashima T."/>
            <person name="Kojima M."/>
            <person name="Kondo S."/>
            <person name="Konno H."/>
            <person name="Nakano K."/>
            <person name="Ninomiya N."/>
            <person name="Nishio T."/>
            <person name="Okada M."/>
            <person name="Plessy C."/>
            <person name="Shibata K."/>
            <person name="Shiraki T."/>
            <person name="Suzuki S."/>
            <person name="Tagami M."/>
            <person name="Waki K."/>
            <person name="Watahiki A."/>
            <person name="Okamura-Oho Y."/>
            <person name="Suzuki H."/>
            <person name="Kawai J."/>
            <person name="Hayashizaki Y."/>
        </authorList>
    </citation>
    <scope>NUCLEOTIDE SEQUENCE [LARGE SCALE MRNA]</scope>
    <source>
        <strain>C57BL/6J</strain>
        <tissue>Embryo</tissue>
        <tissue>Testis</tissue>
    </source>
</reference>
<reference key="2">
    <citation type="journal article" date="2004" name="Genome Res.">
        <title>The status, quality, and expansion of the NIH full-length cDNA project: the Mammalian Gene Collection (MGC).</title>
        <authorList>
            <consortium name="The MGC Project Team"/>
        </authorList>
    </citation>
    <scope>NUCLEOTIDE SEQUENCE [LARGE SCALE MRNA]</scope>
</reference>
<reference key="3">
    <citation type="submission" date="2007-03" db="UniProtKB">
        <authorList>
            <person name="Lubec G."/>
            <person name="Klug S."/>
        </authorList>
    </citation>
    <scope>PROTEIN SEQUENCE OF 244-260</scope>
    <scope>IDENTIFICATION BY MASS SPECTROMETRY</scope>
    <source>
        <tissue>Hippocampus</tissue>
    </source>
</reference>
<reference key="4">
    <citation type="journal article" date="2010" name="Cell">
        <title>A tissue-specific atlas of mouse protein phosphorylation and expression.</title>
        <authorList>
            <person name="Huttlin E.L."/>
            <person name="Jedrychowski M.P."/>
            <person name="Elias J.E."/>
            <person name="Goswami T."/>
            <person name="Rad R."/>
            <person name="Beausoleil S.A."/>
            <person name="Villen J."/>
            <person name="Haas W."/>
            <person name="Sowa M.E."/>
            <person name="Gygi S.P."/>
        </authorList>
    </citation>
    <scope>IDENTIFICATION BY MASS SPECTROMETRY [LARGE SCALE ANALYSIS]</scope>
    <source>
        <tissue>Brain</tissue>
        <tissue>Brown adipose tissue</tissue>
        <tissue>Heart</tissue>
        <tissue>Kidney</tissue>
        <tissue>Liver</tissue>
        <tissue>Lung</tissue>
        <tissue>Pancreas</tissue>
        <tissue>Spleen</tissue>
        <tissue>Testis</tissue>
    </source>
</reference>
<gene>
    <name type="primary">Prps2</name>
</gene>
<comment type="function">
    <text>Catalyzes the synthesis of phosphoribosylpyrophosphate (PRPP) that is essential for nucleotide synthesis.</text>
</comment>
<comment type="catalytic activity">
    <reaction>
        <text>D-ribose 5-phosphate + ATP = 5-phospho-alpha-D-ribose 1-diphosphate + AMP + H(+)</text>
        <dbReference type="Rhea" id="RHEA:15609"/>
        <dbReference type="ChEBI" id="CHEBI:15378"/>
        <dbReference type="ChEBI" id="CHEBI:30616"/>
        <dbReference type="ChEBI" id="CHEBI:58017"/>
        <dbReference type="ChEBI" id="CHEBI:78346"/>
        <dbReference type="ChEBI" id="CHEBI:456215"/>
        <dbReference type="EC" id="2.7.6.1"/>
    </reaction>
</comment>
<comment type="cofactor">
    <cofactor evidence="1">
        <name>Mg(2+)</name>
        <dbReference type="ChEBI" id="CHEBI:18420"/>
    </cofactor>
</comment>
<comment type="activity regulation">
    <text evidence="1">Activated by magnesium and inorganic phosphate. Competitively or non-competitively inhibited by ADP, 2,3-bisphosphoglyceride or GDP (By similarity).</text>
</comment>
<comment type="pathway">
    <text>Metabolic intermediate biosynthesis; 5-phospho-alpha-D-ribose 1-diphosphate biosynthesis; 5-phospho-alpha-D-ribose 1-diphosphate from D-ribose 5-phosphate (route I): step 1/1.</text>
</comment>
<comment type="subunit">
    <text evidence="1">Homodimer. The active form is probably a hexamer composed of 3 homodimers (By similarity).</text>
</comment>
<comment type="similarity">
    <text evidence="3">Belongs to the ribose-phosphate pyrophosphokinase family.</text>
</comment>